<organism>
    <name type="scientific">Plasmopara halstedii</name>
    <name type="common">Downy mildew of sunflower</name>
    <dbReference type="NCBI Taxonomy" id="4781"/>
    <lineage>
        <taxon>Eukaryota</taxon>
        <taxon>Sar</taxon>
        <taxon>Stramenopiles</taxon>
        <taxon>Oomycota</taxon>
        <taxon>Peronosporales</taxon>
        <taxon>Peronosporaceae</taxon>
        <taxon>Plasmopara</taxon>
    </lineage>
</organism>
<accession>A0A0P1B5K4</accession>
<gene>
    <name evidence="4" type="primary">RXLR-C08</name>
</gene>
<comment type="function">
    <text evidence="3">Secreted effector that suppresses pattern-triggered immunity (PTI) in plant host.</text>
</comment>
<comment type="subcellular location">
    <subcellularLocation>
        <location evidence="3">Secreted</location>
    </subcellularLocation>
    <subcellularLocation>
        <location evidence="3">Host Golgi apparatus</location>
    </subcellularLocation>
    <text evidence="3">Also localizes to host P-bodies.</text>
</comment>
<comment type="induction">
    <text evidence="3">Expression is up-regulated in spores.</text>
</comment>
<comment type="domain">
    <text evidence="6">Has the canonical dEER motif, but lacks translocation RxLR motif, which characterizes most oomycete effectors identified so far.</text>
</comment>
<comment type="similarity">
    <text evidence="5">Belongs to the RxLR effector family.</text>
</comment>
<protein>
    <recommendedName>
        <fullName evidence="4">Secreted RxLR effector protein RXLR-C08</fullName>
    </recommendedName>
</protein>
<feature type="signal peptide" evidence="1">
    <location>
        <begin position="1"/>
        <end position="22"/>
    </location>
</feature>
<feature type="chain" id="PRO_5006059196" description="Secreted RxLR effector protein RXLR-C08">
    <location>
        <begin position="23"/>
        <end position="503"/>
    </location>
</feature>
<feature type="short sequence motif" description="dEER" evidence="6">
    <location>
        <begin position="57"/>
        <end position="60"/>
    </location>
</feature>
<feature type="glycosylation site" description="N-linked (GlcNAc...) asparagine" evidence="2">
    <location>
        <position position="27"/>
    </location>
</feature>
<feature type="glycosylation site" description="N-linked (GlcNAc...) asparagine" evidence="2">
    <location>
        <position position="35"/>
    </location>
</feature>
<feature type="glycosylation site" description="N-linked (GlcNAc...) asparagine" evidence="2">
    <location>
        <position position="45"/>
    </location>
</feature>
<feature type="glycosylation site" description="N-linked (GlcNAc...) asparagine" evidence="2">
    <location>
        <position position="108"/>
    </location>
</feature>
<feature type="glycosylation site" description="N-linked (GlcNAc...) asparagine" evidence="2">
    <location>
        <position position="197"/>
    </location>
</feature>
<feature type="glycosylation site" description="N-linked (GlcNAc...) asparagine" evidence="2">
    <location>
        <position position="374"/>
    </location>
</feature>
<keyword id="KW-0325">Glycoprotein</keyword>
<keyword id="KW-1040">Host Golgi apparatus</keyword>
<keyword id="KW-1185">Reference proteome</keyword>
<keyword id="KW-0964">Secreted</keyword>
<keyword id="KW-0732">Signal</keyword>
<keyword id="KW-0843">Virulence</keyword>
<name>RLR08_PLAHL</name>
<dbReference type="EMBL" id="CCYD01003055">
    <property type="protein sequence ID" value="CEG49461.1"/>
    <property type="molecule type" value="Genomic_DNA"/>
</dbReference>
<dbReference type="SMR" id="A0A0P1B5K4"/>
<dbReference type="GlyCosmos" id="A0A0P1B5K4">
    <property type="glycosylation" value="6 sites, No reported glycans"/>
</dbReference>
<dbReference type="EnsemblProtists" id="CEG49461">
    <property type="protein sequence ID" value="CEG49461"/>
    <property type="gene ID" value="CEG49461"/>
</dbReference>
<dbReference type="OMA" id="SCETANC"/>
<dbReference type="OrthoDB" id="73103at2759"/>
<dbReference type="Proteomes" id="UP000054928">
    <property type="component" value="Unassembled WGS sequence"/>
</dbReference>
<dbReference type="GO" id="GO:0005576">
    <property type="term" value="C:extracellular region"/>
    <property type="evidence" value="ECO:0007669"/>
    <property type="project" value="UniProtKB-SubCell"/>
</dbReference>
<dbReference type="GO" id="GO:0044177">
    <property type="term" value="C:host cell Golgi apparatus"/>
    <property type="evidence" value="ECO:0007669"/>
    <property type="project" value="UniProtKB-SubCell"/>
</dbReference>
<evidence type="ECO:0000255" key="1"/>
<evidence type="ECO:0000255" key="2">
    <source>
        <dbReference type="PROSITE-ProRule" id="PRU00498"/>
    </source>
</evidence>
<evidence type="ECO:0000269" key="3">
    <source>
    </source>
</evidence>
<evidence type="ECO:0000303" key="4">
    <source>
    </source>
</evidence>
<evidence type="ECO:0000305" key="5"/>
<evidence type="ECO:0000305" key="6">
    <source>
    </source>
</evidence>
<proteinExistence type="evidence at transcript level"/>
<reference key="1">
    <citation type="journal article" date="2015" name="BMC Genomics">
        <title>Genome analyses of the sunflower pathogen Plasmopara halstedii provide insights into effector evolution in downy mildews and Phytophthora.</title>
        <authorList>
            <person name="Sharma R."/>
            <person name="Xia X."/>
            <person name="Cano L.M."/>
            <person name="Evangelisti E."/>
            <person name="Kemen E."/>
            <person name="Judelson H."/>
            <person name="Oome S."/>
            <person name="Sambles C."/>
            <person name="van den Hoogen D.J."/>
            <person name="Kitner M."/>
            <person name="Klein J."/>
            <person name="Meijer H.J."/>
            <person name="Spring O."/>
            <person name="Win J."/>
            <person name="Zipper R."/>
            <person name="Bode H.B."/>
            <person name="Govers F."/>
            <person name="Kamoun S."/>
            <person name="Schornack S."/>
            <person name="Studholme D.J."/>
            <person name="Van den Ackerveken G."/>
            <person name="Thines M."/>
        </authorList>
    </citation>
    <scope>NUCLEOTIDE SEQUENCE [LARGE SCALE GENOMIC DNA]</scope>
</reference>
<reference key="2">
    <citation type="journal article" date="2019" name="Plant J.">
        <title>Sunflower resistance to multiple downy mildew pathotypes revealed by recognition of conserved effectors of the oomycete Plasmopara halstedii.</title>
        <authorList>
            <person name="Pecrix Y."/>
            <person name="Buendia L."/>
            <person name="Penouilh-Suzette C."/>
            <person name="Marechaux M."/>
            <person name="Legrand L."/>
            <person name="Bouchez O."/>
            <person name="Rengel D."/>
            <person name="Gouzy J."/>
            <person name="Cottret L."/>
            <person name="Vear F."/>
            <person name="Godiard L."/>
        </authorList>
    </citation>
    <scope>DOMAIN</scope>
    <scope>INDUCTION</scope>
    <scope>FUNCTION</scope>
    <scope>SUBCELLULAR LOCATION</scope>
</reference>
<sequence length="503" mass="56185">MRLCGVASAFLSTLILIAHIDASTNLNVSVTDVQNISLPGDQIGNFTQSVSGPPSGDEERTSANSAIRKVDLFVEKLITFQVALRAKINRFLAKLKLAWWRLRNVDPNVTFNKLNLHEADNDILSLDNFHTWVKLVESYNLQHPAEQVSILSKLQEQFGEFEVSIMLEQAKNGADKYTEDIALELQHEQISRWRDDNLSLTALYKALQFGKSEPSLLTGPALRVWNIYTSNIESAETSLFDYLYQTIEDAHLSSLLIAAKQSPETVELATKIQNQLRQKWLEILVPPNLVFQHYKLDTNPTHLLDRPETKLWVRYQKMYWGKTKKEVTLKEMIEDFYKADEIAIIIKSATTDYGKHLAKKLPQCDSKHFKTFHNLTILPLLFVFHYTIGAEDDLSSEKNLISQYNHVPTSCETANCVAGGCLFENCASPLLCRGGLCYFRKCKDATCEGGACIFDNTAEASCPGGGCQFVNVPVTLADGYCDGGGCTLDGDDHPSSLAGSLAE</sequence>